<gene>
    <name type="primary">tmk</name>
    <name type="ordered locus">PA2962</name>
</gene>
<organism>
    <name type="scientific">Pseudomonas aeruginosa (strain ATCC 15692 / DSM 22644 / CIP 104116 / JCM 14847 / LMG 12228 / 1C / PRS 101 / PAO1)</name>
    <dbReference type="NCBI Taxonomy" id="208964"/>
    <lineage>
        <taxon>Bacteria</taxon>
        <taxon>Pseudomonadati</taxon>
        <taxon>Pseudomonadota</taxon>
        <taxon>Gammaproteobacteria</taxon>
        <taxon>Pseudomonadales</taxon>
        <taxon>Pseudomonadaceae</taxon>
        <taxon>Pseudomonas</taxon>
    </lineage>
</organism>
<dbReference type="EC" id="2.7.4.9"/>
<dbReference type="EMBL" id="AE004091">
    <property type="protein sequence ID" value="AAG06350.1"/>
    <property type="molecule type" value="Genomic_DNA"/>
</dbReference>
<dbReference type="PIR" id="E83275">
    <property type="entry name" value="E83275"/>
</dbReference>
<dbReference type="RefSeq" id="NP_251652.1">
    <property type="nucleotide sequence ID" value="NC_002516.2"/>
</dbReference>
<dbReference type="RefSeq" id="WP_003091125.1">
    <property type="nucleotide sequence ID" value="NZ_QZGE01000009.1"/>
</dbReference>
<dbReference type="PDB" id="3UWK">
    <property type="method" value="X-ray"/>
    <property type="resolution" value="1.91 A"/>
    <property type="chains" value="A/B=1-210"/>
</dbReference>
<dbReference type="PDB" id="3UWO">
    <property type="method" value="X-ray"/>
    <property type="resolution" value="1.70 A"/>
    <property type="chains" value="A/B=1-210"/>
</dbReference>
<dbReference type="PDB" id="3UXM">
    <property type="method" value="X-ray"/>
    <property type="resolution" value="1.95 A"/>
    <property type="chains" value="A/B/C/D=2-210"/>
</dbReference>
<dbReference type="PDB" id="4E5U">
    <property type="method" value="X-ray"/>
    <property type="resolution" value="1.81 A"/>
    <property type="chains" value="A/B=1-210"/>
</dbReference>
<dbReference type="PDB" id="4EDH">
    <property type="method" value="X-ray"/>
    <property type="resolution" value="1.32 A"/>
    <property type="chains" value="A/B=1-210"/>
</dbReference>
<dbReference type="PDB" id="4ESH">
    <property type="method" value="X-ray"/>
    <property type="resolution" value="1.95 A"/>
    <property type="chains" value="A=1-210"/>
</dbReference>
<dbReference type="PDB" id="4GMD">
    <property type="method" value="X-ray"/>
    <property type="resolution" value="1.98 A"/>
    <property type="chains" value="A/B/C/D=1-210"/>
</dbReference>
<dbReference type="PDBsum" id="3UWK"/>
<dbReference type="PDBsum" id="3UWO"/>
<dbReference type="PDBsum" id="3UXM"/>
<dbReference type="PDBsum" id="4E5U"/>
<dbReference type="PDBsum" id="4EDH"/>
<dbReference type="PDBsum" id="4ESH"/>
<dbReference type="PDBsum" id="4GMD"/>
<dbReference type="SMR" id="Q9HZN8"/>
<dbReference type="FunCoup" id="Q9HZN8">
    <property type="interactions" value="637"/>
</dbReference>
<dbReference type="STRING" id="208964.PA2962"/>
<dbReference type="PaxDb" id="208964-PA2962"/>
<dbReference type="DNASU" id="878730"/>
<dbReference type="GeneID" id="878730"/>
<dbReference type="KEGG" id="pae:PA2962"/>
<dbReference type="PATRIC" id="fig|208964.12.peg.3108"/>
<dbReference type="PseudoCAP" id="PA2962"/>
<dbReference type="HOGENOM" id="CLU_049131_0_2_6"/>
<dbReference type="InParanoid" id="Q9HZN8"/>
<dbReference type="OrthoDB" id="9774907at2"/>
<dbReference type="PhylomeDB" id="Q9HZN8"/>
<dbReference type="BioCyc" id="PAER208964:G1FZ6-3014-MONOMER"/>
<dbReference type="BRENDA" id="2.7.4.9">
    <property type="organism ID" value="5087"/>
</dbReference>
<dbReference type="EvolutionaryTrace" id="Q9HZN8"/>
<dbReference type="Proteomes" id="UP000002438">
    <property type="component" value="Chromosome"/>
</dbReference>
<dbReference type="GO" id="GO:0005737">
    <property type="term" value="C:cytoplasm"/>
    <property type="evidence" value="ECO:0000318"/>
    <property type="project" value="GO_Central"/>
</dbReference>
<dbReference type="GO" id="GO:0005829">
    <property type="term" value="C:cytosol"/>
    <property type="evidence" value="ECO:0000318"/>
    <property type="project" value="GO_Central"/>
</dbReference>
<dbReference type="GO" id="GO:0005524">
    <property type="term" value="F:ATP binding"/>
    <property type="evidence" value="ECO:0007669"/>
    <property type="project" value="UniProtKB-UniRule"/>
</dbReference>
<dbReference type="GO" id="GO:0004798">
    <property type="term" value="F:dTMP kinase activity"/>
    <property type="evidence" value="ECO:0000318"/>
    <property type="project" value="GO_Central"/>
</dbReference>
<dbReference type="GO" id="GO:0006233">
    <property type="term" value="P:dTDP biosynthetic process"/>
    <property type="evidence" value="ECO:0000318"/>
    <property type="project" value="GO_Central"/>
</dbReference>
<dbReference type="GO" id="GO:0006235">
    <property type="term" value="P:dTTP biosynthetic process"/>
    <property type="evidence" value="ECO:0000318"/>
    <property type="project" value="GO_Central"/>
</dbReference>
<dbReference type="GO" id="GO:0006227">
    <property type="term" value="P:dUDP biosynthetic process"/>
    <property type="evidence" value="ECO:0000318"/>
    <property type="project" value="GO_Central"/>
</dbReference>
<dbReference type="CDD" id="cd01672">
    <property type="entry name" value="TMPK"/>
    <property type="match status" value="1"/>
</dbReference>
<dbReference type="FunFam" id="3.40.50.300:FF:000321">
    <property type="entry name" value="Thymidylate kinase"/>
    <property type="match status" value="1"/>
</dbReference>
<dbReference type="Gene3D" id="3.40.50.300">
    <property type="entry name" value="P-loop containing nucleotide triphosphate hydrolases"/>
    <property type="match status" value="1"/>
</dbReference>
<dbReference type="HAMAP" id="MF_00165">
    <property type="entry name" value="Thymidylate_kinase"/>
    <property type="match status" value="1"/>
</dbReference>
<dbReference type="InterPro" id="IPR027417">
    <property type="entry name" value="P-loop_NTPase"/>
</dbReference>
<dbReference type="InterPro" id="IPR039430">
    <property type="entry name" value="Thymidylate_kin-like_dom"/>
</dbReference>
<dbReference type="InterPro" id="IPR018094">
    <property type="entry name" value="Thymidylate_kinase"/>
</dbReference>
<dbReference type="NCBIfam" id="TIGR00041">
    <property type="entry name" value="DTMP_kinase"/>
    <property type="match status" value="1"/>
</dbReference>
<dbReference type="PANTHER" id="PTHR10344">
    <property type="entry name" value="THYMIDYLATE KINASE"/>
    <property type="match status" value="1"/>
</dbReference>
<dbReference type="PANTHER" id="PTHR10344:SF4">
    <property type="entry name" value="UMP-CMP KINASE 2, MITOCHONDRIAL"/>
    <property type="match status" value="1"/>
</dbReference>
<dbReference type="Pfam" id="PF02223">
    <property type="entry name" value="Thymidylate_kin"/>
    <property type="match status" value="1"/>
</dbReference>
<dbReference type="SUPFAM" id="SSF52540">
    <property type="entry name" value="P-loop containing nucleoside triphosphate hydrolases"/>
    <property type="match status" value="1"/>
</dbReference>
<evidence type="ECO:0000250" key="1"/>
<evidence type="ECO:0000255" key="2"/>
<evidence type="ECO:0000305" key="3"/>
<evidence type="ECO:0007829" key="4">
    <source>
        <dbReference type="PDB" id="3UWK"/>
    </source>
</evidence>
<evidence type="ECO:0007829" key="5">
    <source>
        <dbReference type="PDB" id="4EDH"/>
    </source>
</evidence>
<sequence length="210" mass="23109">MTGLFVTLEGPEGAGKSTNRDYLAERLRERGIEVQLTREPGGTPLAERIRELLLAPSDEPMAADTELLLMFAARAQHLAGVIRPALARGAVVLCDRFTDATYAYQGGGRGLPEARIAALESFVQGDLRPDLTLVFDLPVEIGLARAAARGRLDRFEQEDRRFFEAVRQTYLQRAAQAPERYQVLDAGLPLAEVQAGLDRLLPNLLERLNG</sequence>
<reference key="1">
    <citation type="journal article" date="2000" name="Nature">
        <title>Complete genome sequence of Pseudomonas aeruginosa PAO1, an opportunistic pathogen.</title>
        <authorList>
            <person name="Stover C.K."/>
            <person name="Pham X.-Q.T."/>
            <person name="Erwin A.L."/>
            <person name="Mizoguchi S.D."/>
            <person name="Warrener P."/>
            <person name="Hickey M.J."/>
            <person name="Brinkman F.S.L."/>
            <person name="Hufnagle W.O."/>
            <person name="Kowalik D.J."/>
            <person name="Lagrou M."/>
            <person name="Garber R.L."/>
            <person name="Goltry L."/>
            <person name="Tolentino E."/>
            <person name="Westbrock-Wadman S."/>
            <person name="Yuan Y."/>
            <person name="Brody L.L."/>
            <person name="Coulter S.N."/>
            <person name="Folger K.R."/>
            <person name="Kas A."/>
            <person name="Larbig K."/>
            <person name="Lim R.M."/>
            <person name="Smith K.A."/>
            <person name="Spencer D.H."/>
            <person name="Wong G.K.-S."/>
            <person name="Wu Z."/>
            <person name="Paulsen I.T."/>
            <person name="Reizer J."/>
            <person name="Saier M.H. Jr."/>
            <person name="Hancock R.E.W."/>
            <person name="Lory S."/>
            <person name="Olson M.V."/>
        </authorList>
    </citation>
    <scope>NUCLEOTIDE SEQUENCE [LARGE SCALE GENOMIC DNA]</scope>
    <source>
        <strain>ATCC 15692 / DSM 22644 / CIP 104116 / JCM 14847 / LMG 12228 / 1C / PRS 101 / PAO1</strain>
    </source>
</reference>
<proteinExistence type="evidence at protein level"/>
<feature type="chain" id="PRO_0000155324" description="Thymidylate kinase">
    <location>
        <begin position="1"/>
        <end position="210"/>
    </location>
</feature>
<feature type="binding site" evidence="2">
    <location>
        <begin position="10"/>
        <end position="17"/>
    </location>
    <ligand>
        <name>ATP</name>
        <dbReference type="ChEBI" id="CHEBI:30616"/>
    </ligand>
</feature>
<feature type="strand" evidence="5">
    <location>
        <begin position="4"/>
        <end position="9"/>
    </location>
</feature>
<feature type="helix" evidence="4">
    <location>
        <begin position="12"/>
        <end position="14"/>
    </location>
</feature>
<feature type="helix" evidence="5">
    <location>
        <begin position="16"/>
        <end position="28"/>
    </location>
</feature>
<feature type="turn" evidence="5">
    <location>
        <begin position="29"/>
        <end position="31"/>
    </location>
</feature>
<feature type="strand" evidence="5">
    <location>
        <begin position="34"/>
        <end position="40"/>
    </location>
</feature>
<feature type="helix" evidence="5">
    <location>
        <begin position="44"/>
        <end position="54"/>
    </location>
</feature>
<feature type="helix" evidence="5">
    <location>
        <begin position="63"/>
        <end position="80"/>
    </location>
</feature>
<feature type="helix" evidence="5">
    <location>
        <begin position="82"/>
        <end position="87"/>
    </location>
</feature>
<feature type="strand" evidence="5">
    <location>
        <begin position="91"/>
        <end position="96"/>
    </location>
</feature>
<feature type="helix" evidence="5">
    <location>
        <begin position="98"/>
        <end position="104"/>
    </location>
</feature>
<feature type="turn" evidence="5">
    <location>
        <begin position="105"/>
        <end position="109"/>
    </location>
</feature>
<feature type="helix" evidence="5">
    <location>
        <begin position="113"/>
        <end position="124"/>
    </location>
</feature>
<feature type="strand" evidence="5">
    <location>
        <begin position="130"/>
        <end position="136"/>
    </location>
</feature>
<feature type="helix" evidence="5">
    <location>
        <begin position="139"/>
        <end position="146"/>
    </location>
</feature>
<feature type="turn" evidence="5">
    <location>
        <begin position="154"/>
        <end position="157"/>
    </location>
</feature>
<feature type="helix" evidence="5">
    <location>
        <begin position="160"/>
        <end position="176"/>
    </location>
</feature>
<feature type="turn" evidence="5">
    <location>
        <begin position="178"/>
        <end position="180"/>
    </location>
</feature>
<feature type="strand" evidence="5">
    <location>
        <begin position="181"/>
        <end position="185"/>
    </location>
</feature>
<feature type="helix" evidence="5">
    <location>
        <begin position="190"/>
        <end position="208"/>
    </location>
</feature>
<protein>
    <recommendedName>
        <fullName>Thymidylate kinase</fullName>
        <ecNumber>2.7.4.9</ecNumber>
    </recommendedName>
    <alternativeName>
        <fullName>dTMP kinase</fullName>
    </alternativeName>
</protein>
<comment type="function">
    <text evidence="1">Phosphorylation of dTMP to form dTDP in both de novo and salvage pathways of dTTP synthesis.</text>
</comment>
<comment type="catalytic activity">
    <reaction>
        <text>dTMP + ATP = dTDP + ADP</text>
        <dbReference type="Rhea" id="RHEA:13517"/>
        <dbReference type="ChEBI" id="CHEBI:30616"/>
        <dbReference type="ChEBI" id="CHEBI:58369"/>
        <dbReference type="ChEBI" id="CHEBI:63528"/>
        <dbReference type="ChEBI" id="CHEBI:456216"/>
        <dbReference type="EC" id="2.7.4.9"/>
    </reaction>
</comment>
<comment type="similarity">
    <text evidence="3">Belongs to the thymidylate kinase family.</text>
</comment>
<keyword id="KW-0002">3D-structure</keyword>
<keyword id="KW-0067">ATP-binding</keyword>
<keyword id="KW-0418">Kinase</keyword>
<keyword id="KW-0545">Nucleotide biosynthesis</keyword>
<keyword id="KW-0547">Nucleotide-binding</keyword>
<keyword id="KW-1185">Reference proteome</keyword>
<keyword id="KW-0808">Transferase</keyword>
<name>KTHY_PSEAE</name>
<accession>Q9HZN8</accession>